<dbReference type="EC" id="2.7.1.170" evidence="1"/>
<dbReference type="EMBL" id="CP000469">
    <property type="protein sequence ID" value="ABK49284.1"/>
    <property type="molecule type" value="Genomic_DNA"/>
</dbReference>
<dbReference type="RefSeq" id="WP_011717903.1">
    <property type="nucleotide sequence ID" value="NC_008577.1"/>
</dbReference>
<dbReference type="SMR" id="A0KZR5"/>
<dbReference type="STRING" id="94122.Shewana3_3060"/>
<dbReference type="KEGG" id="shn:Shewana3_3060"/>
<dbReference type="eggNOG" id="COG2377">
    <property type="taxonomic scope" value="Bacteria"/>
</dbReference>
<dbReference type="HOGENOM" id="CLU_038782_0_0_6"/>
<dbReference type="OrthoDB" id="9763949at2"/>
<dbReference type="UniPathway" id="UPA00343"/>
<dbReference type="UniPathway" id="UPA00544"/>
<dbReference type="Proteomes" id="UP000002589">
    <property type="component" value="Chromosome"/>
</dbReference>
<dbReference type="GO" id="GO:0005524">
    <property type="term" value="F:ATP binding"/>
    <property type="evidence" value="ECO:0007669"/>
    <property type="project" value="UniProtKB-UniRule"/>
</dbReference>
<dbReference type="GO" id="GO:0016301">
    <property type="term" value="F:kinase activity"/>
    <property type="evidence" value="ECO:0007669"/>
    <property type="project" value="UniProtKB-KW"/>
</dbReference>
<dbReference type="GO" id="GO:0016773">
    <property type="term" value="F:phosphotransferase activity, alcohol group as acceptor"/>
    <property type="evidence" value="ECO:0007669"/>
    <property type="project" value="UniProtKB-UniRule"/>
</dbReference>
<dbReference type="GO" id="GO:0097175">
    <property type="term" value="P:1,6-anhydro-N-acetyl-beta-muramic acid catabolic process"/>
    <property type="evidence" value="ECO:0007669"/>
    <property type="project" value="UniProtKB-UniRule"/>
</dbReference>
<dbReference type="GO" id="GO:0006040">
    <property type="term" value="P:amino sugar metabolic process"/>
    <property type="evidence" value="ECO:0007669"/>
    <property type="project" value="InterPro"/>
</dbReference>
<dbReference type="GO" id="GO:0009254">
    <property type="term" value="P:peptidoglycan turnover"/>
    <property type="evidence" value="ECO:0007669"/>
    <property type="project" value="UniProtKB-UniRule"/>
</dbReference>
<dbReference type="CDD" id="cd24050">
    <property type="entry name" value="ASKHA_NBD_ANMK"/>
    <property type="match status" value="1"/>
</dbReference>
<dbReference type="Gene3D" id="3.30.420.40">
    <property type="match status" value="2"/>
</dbReference>
<dbReference type="HAMAP" id="MF_01270">
    <property type="entry name" value="AnhMurNAc_kinase"/>
    <property type="match status" value="1"/>
</dbReference>
<dbReference type="InterPro" id="IPR005338">
    <property type="entry name" value="Anhydro_N_Ac-Mur_kinase"/>
</dbReference>
<dbReference type="InterPro" id="IPR043129">
    <property type="entry name" value="ATPase_NBD"/>
</dbReference>
<dbReference type="NCBIfam" id="NF007139">
    <property type="entry name" value="PRK09585.1-3"/>
    <property type="match status" value="1"/>
</dbReference>
<dbReference type="NCBIfam" id="NF007148">
    <property type="entry name" value="PRK09585.3-2"/>
    <property type="match status" value="1"/>
</dbReference>
<dbReference type="PANTHER" id="PTHR30605">
    <property type="entry name" value="ANHYDRO-N-ACETYLMURAMIC ACID KINASE"/>
    <property type="match status" value="1"/>
</dbReference>
<dbReference type="PANTHER" id="PTHR30605:SF0">
    <property type="entry name" value="ANHYDRO-N-ACETYLMURAMIC ACID KINASE"/>
    <property type="match status" value="1"/>
</dbReference>
<dbReference type="Pfam" id="PF03702">
    <property type="entry name" value="AnmK"/>
    <property type="match status" value="1"/>
</dbReference>
<dbReference type="SUPFAM" id="SSF53067">
    <property type="entry name" value="Actin-like ATPase domain"/>
    <property type="match status" value="1"/>
</dbReference>
<evidence type="ECO:0000255" key="1">
    <source>
        <dbReference type="HAMAP-Rule" id="MF_01270"/>
    </source>
</evidence>
<proteinExistence type="inferred from homology"/>
<comment type="function">
    <text evidence="1">Catalyzes the specific phosphorylation of 1,6-anhydro-N-acetylmuramic acid (anhMurNAc) with the simultaneous cleavage of the 1,6-anhydro ring, generating MurNAc-6-P. Is required for the utilization of anhMurNAc either imported from the medium or derived from its own cell wall murein, and thus plays a role in cell wall recycling.</text>
</comment>
<comment type="catalytic activity">
    <reaction evidence="1">
        <text>1,6-anhydro-N-acetyl-beta-muramate + ATP + H2O = N-acetyl-D-muramate 6-phosphate + ADP + H(+)</text>
        <dbReference type="Rhea" id="RHEA:24952"/>
        <dbReference type="ChEBI" id="CHEBI:15377"/>
        <dbReference type="ChEBI" id="CHEBI:15378"/>
        <dbReference type="ChEBI" id="CHEBI:30616"/>
        <dbReference type="ChEBI" id="CHEBI:58690"/>
        <dbReference type="ChEBI" id="CHEBI:58722"/>
        <dbReference type="ChEBI" id="CHEBI:456216"/>
        <dbReference type="EC" id="2.7.1.170"/>
    </reaction>
</comment>
<comment type="pathway">
    <text evidence="1">Amino-sugar metabolism; 1,6-anhydro-N-acetylmuramate degradation.</text>
</comment>
<comment type="pathway">
    <text evidence="1">Cell wall biogenesis; peptidoglycan recycling.</text>
</comment>
<comment type="similarity">
    <text evidence="1">Belongs to the anhydro-N-acetylmuramic acid kinase family.</text>
</comment>
<feature type="chain" id="PRO_1000067365" description="Anhydro-N-acetylmuramic acid kinase">
    <location>
        <begin position="1"/>
        <end position="369"/>
    </location>
</feature>
<feature type="binding site" evidence="1">
    <location>
        <begin position="12"/>
        <end position="19"/>
    </location>
    <ligand>
        <name>ATP</name>
        <dbReference type="ChEBI" id="CHEBI:30616"/>
    </ligand>
</feature>
<gene>
    <name evidence="1" type="primary">anmK</name>
    <name type="ordered locus">Shewana3_3060</name>
</gene>
<accession>A0KZR5</accession>
<protein>
    <recommendedName>
        <fullName evidence="1">Anhydro-N-acetylmuramic acid kinase</fullName>
        <ecNumber evidence="1">2.7.1.170</ecNumber>
    </recommendedName>
    <alternativeName>
        <fullName evidence="1">AnhMurNAc kinase</fullName>
    </alternativeName>
</protein>
<reference key="1">
    <citation type="submission" date="2006-09" db="EMBL/GenBank/DDBJ databases">
        <title>Complete sequence of chromosome 1 of Shewanella sp. ANA-3.</title>
        <authorList>
            <person name="Copeland A."/>
            <person name="Lucas S."/>
            <person name="Lapidus A."/>
            <person name="Barry K."/>
            <person name="Detter J.C."/>
            <person name="Glavina del Rio T."/>
            <person name="Hammon N."/>
            <person name="Israni S."/>
            <person name="Dalin E."/>
            <person name="Tice H."/>
            <person name="Pitluck S."/>
            <person name="Chertkov O."/>
            <person name="Brettin T."/>
            <person name="Bruce D."/>
            <person name="Han C."/>
            <person name="Tapia R."/>
            <person name="Gilna P."/>
            <person name="Schmutz J."/>
            <person name="Larimer F."/>
            <person name="Land M."/>
            <person name="Hauser L."/>
            <person name="Kyrpides N."/>
            <person name="Kim E."/>
            <person name="Newman D."/>
            <person name="Salticov C."/>
            <person name="Konstantinidis K."/>
            <person name="Klappenback J."/>
            <person name="Tiedje J."/>
            <person name="Richardson P."/>
        </authorList>
    </citation>
    <scope>NUCLEOTIDE SEQUENCE [LARGE SCALE GENOMIC DNA]</scope>
    <source>
        <strain>ANA-3</strain>
    </source>
</reference>
<keyword id="KW-0067">ATP-binding</keyword>
<keyword id="KW-0119">Carbohydrate metabolism</keyword>
<keyword id="KW-0418">Kinase</keyword>
<keyword id="KW-0547">Nucleotide-binding</keyword>
<keyword id="KW-0808">Transferase</keyword>
<organism>
    <name type="scientific">Shewanella sp. (strain ANA-3)</name>
    <dbReference type="NCBI Taxonomy" id="94122"/>
    <lineage>
        <taxon>Bacteria</taxon>
        <taxon>Pseudomonadati</taxon>
        <taxon>Pseudomonadota</taxon>
        <taxon>Gammaproteobacteria</taxon>
        <taxon>Alteromonadales</taxon>
        <taxon>Shewanellaceae</taxon>
        <taxon>Shewanella</taxon>
    </lineage>
</organism>
<sequence>MNKAYYIGLMSGTSMDGVDAVLVDFAGEQPQLIATHTEAIPSHLLKGLQRLCLPGNDEINRLGRLDRSVGKLFALAVNNLLAKAQIAKEDIIAIGSHGQTVRHMPNLEVGFTLQIGDPNTIATETGIDVIADFRRKDIALGGQGAPLVPAFHQQTFAQVGKKRVILNIGGIANITYLTGNREEVLGFDTGPGNTLIDAWIQQVKNEPYDKDGEWAASGKTDQQLLAQLLSHPYFSLAYPKSTGRELFNQAWLEQQLSQFNQLDEEDIQSTLLDLTCHSIARDILKLAPVGELFVCGGGAFNSELMQRLAALLPDYHIDTTSALGVDPKWAEGIAFAWLAMRHHLGLPANLPAVTGASREAVLGGRFSAK</sequence>
<name>ANMK_SHESA</name>